<dbReference type="EC" id="1.8.4.12" evidence="1"/>
<dbReference type="EMBL" id="BA000037">
    <property type="protein sequence ID" value="BAC93912.1"/>
    <property type="molecule type" value="Genomic_DNA"/>
</dbReference>
<dbReference type="SMR" id="Q7MMC4"/>
<dbReference type="STRING" id="672.VV93_v1c10660"/>
<dbReference type="KEGG" id="vvy:VV1148"/>
<dbReference type="PATRIC" id="fig|196600.6.peg.1143"/>
<dbReference type="eggNOG" id="COG0229">
    <property type="taxonomic scope" value="Bacteria"/>
</dbReference>
<dbReference type="HOGENOM" id="CLU_031040_8_5_6"/>
<dbReference type="Proteomes" id="UP000002675">
    <property type="component" value="Chromosome I"/>
</dbReference>
<dbReference type="GO" id="GO:0005737">
    <property type="term" value="C:cytoplasm"/>
    <property type="evidence" value="ECO:0007669"/>
    <property type="project" value="TreeGrafter"/>
</dbReference>
<dbReference type="GO" id="GO:0033743">
    <property type="term" value="F:peptide-methionine (R)-S-oxide reductase activity"/>
    <property type="evidence" value="ECO:0007669"/>
    <property type="project" value="UniProtKB-UniRule"/>
</dbReference>
<dbReference type="GO" id="GO:0008270">
    <property type="term" value="F:zinc ion binding"/>
    <property type="evidence" value="ECO:0007669"/>
    <property type="project" value="UniProtKB-UniRule"/>
</dbReference>
<dbReference type="GO" id="GO:0030091">
    <property type="term" value="P:protein repair"/>
    <property type="evidence" value="ECO:0007669"/>
    <property type="project" value="InterPro"/>
</dbReference>
<dbReference type="GO" id="GO:0006979">
    <property type="term" value="P:response to oxidative stress"/>
    <property type="evidence" value="ECO:0007669"/>
    <property type="project" value="InterPro"/>
</dbReference>
<dbReference type="FunFam" id="2.170.150.20:FF:000001">
    <property type="entry name" value="Peptide methionine sulfoxide reductase MsrB"/>
    <property type="match status" value="1"/>
</dbReference>
<dbReference type="Gene3D" id="2.170.150.20">
    <property type="entry name" value="Peptide methionine sulfoxide reductase"/>
    <property type="match status" value="1"/>
</dbReference>
<dbReference type="HAMAP" id="MF_01400">
    <property type="entry name" value="MsrB"/>
    <property type="match status" value="1"/>
</dbReference>
<dbReference type="InterPro" id="IPR028427">
    <property type="entry name" value="Met_Sox_Rdtase_MsrB"/>
</dbReference>
<dbReference type="InterPro" id="IPR002579">
    <property type="entry name" value="Met_Sox_Rdtase_MsrB_dom"/>
</dbReference>
<dbReference type="InterPro" id="IPR011057">
    <property type="entry name" value="Mss4-like_sf"/>
</dbReference>
<dbReference type="NCBIfam" id="TIGR00357">
    <property type="entry name" value="peptide-methionine (R)-S-oxide reductase MsrB"/>
    <property type="match status" value="1"/>
</dbReference>
<dbReference type="PANTHER" id="PTHR10173">
    <property type="entry name" value="METHIONINE SULFOXIDE REDUCTASE"/>
    <property type="match status" value="1"/>
</dbReference>
<dbReference type="PANTHER" id="PTHR10173:SF52">
    <property type="entry name" value="METHIONINE-R-SULFOXIDE REDUCTASE B1"/>
    <property type="match status" value="1"/>
</dbReference>
<dbReference type="Pfam" id="PF01641">
    <property type="entry name" value="SelR"/>
    <property type="match status" value="1"/>
</dbReference>
<dbReference type="SUPFAM" id="SSF51316">
    <property type="entry name" value="Mss4-like"/>
    <property type="match status" value="1"/>
</dbReference>
<dbReference type="PROSITE" id="PS51790">
    <property type="entry name" value="MSRB"/>
    <property type="match status" value="1"/>
</dbReference>
<proteinExistence type="inferred from homology"/>
<gene>
    <name evidence="1" type="primary">msrB</name>
    <name type="ordered locus">VV1148</name>
</gene>
<protein>
    <recommendedName>
        <fullName evidence="1">Peptide methionine sulfoxide reductase MsrB</fullName>
        <ecNumber evidence="1">1.8.4.12</ecNumber>
    </recommendedName>
    <alternativeName>
        <fullName evidence="1">Peptide-methionine (R)-S-oxide reductase</fullName>
    </alternativeName>
</protein>
<keyword id="KW-0479">Metal-binding</keyword>
<keyword id="KW-0560">Oxidoreductase</keyword>
<keyword id="KW-0862">Zinc</keyword>
<feature type="chain" id="PRO_0000140315" description="Peptide methionine sulfoxide reductase MsrB">
    <location>
        <begin position="1"/>
        <end position="154"/>
    </location>
</feature>
<feature type="domain" description="MsrB" evidence="2">
    <location>
        <begin position="28"/>
        <end position="150"/>
    </location>
</feature>
<feature type="active site" description="Nucleophile" evidence="2">
    <location>
        <position position="139"/>
    </location>
</feature>
<feature type="binding site" evidence="2">
    <location>
        <position position="67"/>
    </location>
    <ligand>
        <name>Zn(2+)</name>
        <dbReference type="ChEBI" id="CHEBI:29105"/>
    </ligand>
</feature>
<feature type="binding site" evidence="2">
    <location>
        <position position="70"/>
    </location>
    <ligand>
        <name>Zn(2+)</name>
        <dbReference type="ChEBI" id="CHEBI:29105"/>
    </ligand>
</feature>
<feature type="binding site" evidence="2">
    <location>
        <position position="116"/>
    </location>
    <ligand>
        <name>Zn(2+)</name>
        <dbReference type="ChEBI" id="CHEBI:29105"/>
    </ligand>
</feature>
<feature type="binding site" evidence="2">
    <location>
        <position position="119"/>
    </location>
    <ligand>
        <name>Zn(2+)</name>
        <dbReference type="ChEBI" id="CHEBI:29105"/>
    </ligand>
</feature>
<evidence type="ECO:0000255" key="1">
    <source>
        <dbReference type="HAMAP-Rule" id="MF_01400"/>
    </source>
</evidence>
<evidence type="ECO:0000255" key="2">
    <source>
        <dbReference type="PROSITE-ProRule" id="PRU01126"/>
    </source>
</evidence>
<name>MSRB_VIBVY</name>
<sequence length="154" mass="17527">MHKKSSTLIRKREISDVTKESKVVLKSDQQWREQLSEQEYHVCREQGTEPPFSGKLLHNKDSGEYACTCCYAPLFSSVNKYDSGCGWPSFDAPINETAVLYLDDFSHGMKRVEIRCARCDSHLGHVFPDGPKTTGERFCVNSVSLIFNKIETNE</sequence>
<organism>
    <name type="scientific">Vibrio vulnificus (strain YJ016)</name>
    <dbReference type="NCBI Taxonomy" id="196600"/>
    <lineage>
        <taxon>Bacteria</taxon>
        <taxon>Pseudomonadati</taxon>
        <taxon>Pseudomonadota</taxon>
        <taxon>Gammaproteobacteria</taxon>
        <taxon>Vibrionales</taxon>
        <taxon>Vibrionaceae</taxon>
        <taxon>Vibrio</taxon>
    </lineage>
</organism>
<comment type="catalytic activity">
    <reaction evidence="1">
        <text>L-methionyl-[protein] + [thioredoxin]-disulfide + H2O = L-methionyl-(R)-S-oxide-[protein] + [thioredoxin]-dithiol</text>
        <dbReference type="Rhea" id="RHEA:24164"/>
        <dbReference type="Rhea" id="RHEA-COMP:10698"/>
        <dbReference type="Rhea" id="RHEA-COMP:10700"/>
        <dbReference type="Rhea" id="RHEA-COMP:12313"/>
        <dbReference type="Rhea" id="RHEA-COMP:12314"/>
        <dbReference type="ChEBI" id="CHEBI:15377"/>
        <dbReference type="ChEBI" id="CHEBI:16044"/>
        <dbReference type="ChEBI" id="CHEBI:29950"/>
        <dbReference type="ChEBI" id="CHEBI:45764"/>
        <dbReference type="ChEBI" id="CHEBI:50058"/>
        <dbReference type="EC" id="1.8.4.12"/>
    </reaction>
</comment>
<comment type="cofactor">
    <cofactor evidence="1">
        <name>Zn(2+)</name>
        <dbReference type="ChEBI" id="CHEBI:29105"/>
    </cofactor>
    <text evidence="1">Binds 1 zinc ion per subunit. The zinc ion is important for the structural integrity of the protein.</text>
</comment>
<comment type="similarity">
    <text evidence="1">Belongs to the MsrB Met sulfoxide reductase family.</text>
</comment>
<reference key="1">
    <citation type="journal article" date="2003" name="Genome Res.">
        <title>Comparative genome analysis of Vibrio vulnificus, a marine pathogen.</title>
        <authorList>
            <person name="Chen C.-Y."/>
            <person name="Wu K.-M."/>
            <person name="Chang Y.-C."/>
            <person name="Chang C.-H."/>
            <person name="Tsai H.-C."/>
            <person name="Liao T.-L."/>
            <person name="Liu Y.-M."/>
            <person name="Chen H.-J."/>
            <person name="Shen A.B.-T."/>
            <person name="Li J.-C."/>
            <person name="Su T.-L."/>
            <person name="Shao C.-P."/>
            <person name="Lee C.-T."/>
            <person name="Hor L.-I."/>
            <person name="Tsai S.-F."/>
        </authorList>
    </citation>
    <scope>NUCLEOTIDE SEQUENCE [LARGE SCALE GENOMIC DNA]</scope>
    <source>
        <strain>YJ016</strain>
    </source>
</reference>
<accession>Q7MMC4</accession>